<sequence length="95" mass="10877">MTITKEKIATMLSSKLGFSNNLCEEIVNTVFFNILEIAKEQKLTLKNFGSFEVKQKNPRPGINFHTKSPIIIESKKNLRFIPSTKLKALINEHDK</sequence>
<name>HLP_RICFE</name>
<accession>Q4UN06</accession>
<feature type="chain" id="PRO_0000280386" description="Histone-like DNA-binding protein">
    <location>
        <begin position="1"/>
        <end position="95"/>
    </location>
</feature>
<organism>
    <name type="scientific">Rickettsia felis (strain ATCC VR-1525 / URRWXCal2)</name>
    <name type="common">Rickettsia azadi</name>
    <dbReference type="NCBI Taxonomy" id="315456"/>
    <lineage>
        <taxon>Bacteria</taxon>
        <taxon>Pseudomonadati</taxon>
        <taxon>Pseudomonadota</taxon>
        <taxon>Alphaproteobacteria</taxon>
        <taxon>Rickettsiales</taxon>
        <taxon>Rickettsiaceae</taxon>
        <taxon>Rickettsieae</taxon>
        <taxon>Rickettsia</taxon>
        <taxon>spotted fever group</taxon>
    </lineage>
</organism>
<gene>
    <name type="ordered locus">RF_0201</name>
</gene>
<proteinExistence type="inferred from homology"/>
<comment type="similarity">
    <text evidence="1">Belongs to the bacterial histone-like protein family.</text>
</comment>
<dbReference type="EMBL" id="CP000053">
    <property type="protein sequence ID" value="AAY61052.1"/>
    <property type="molecule type" value="Genomic_DNA"/>
</dbReference>
<dbReference type="SMR" id="Q4UN06"/>
<dbReference type="STRING" id="315456.RF_0201"/>
<dbReference type="KEGG" id="rfe:RF_0201"/>
<dbReference type="eggNOG" id="COG0776">
    <property type="taxonomic scope" value="Bacteria"/>
</dbReference>
<dbReference type="HOGENOM" id="CLU_105066_1_2_5"/>
<dbReference type="OrthoDB" id="9804203at2"/>
<dbReference type="Proteomes" id="UP000008548">
    <property type="component" value="Chromosome"/>
</dbReference>
<dbReference type="GO" id="GO:0005829">
    <property type="term" value="C:cytosol"/>
    <property type="evidence" value="ECO:0007669"/>
    <property type="project" value="TreeGrafter"/>
</dbReference>
<dbReference type="GO" id="GO:0003677">
    <property type="term" value="F:DNA binding"/>
    <property type="evidence" value="ECO:0007669"/>
    <property type="project" value="UniProtKB-KW"/>
</dbReference>
<dbReference type="GO" id="GO:0030527">
    <property type="term" value="F:structural constituent of chromatin"/>
    <property type="evidence" value="ECO:0007669"/>
    <property type="project" value="InterPro"/>
</dbReference>
<dbReference type="Gene3D" id="4.10.520.10">
    <property type="entry name" value="IHF-like DNA-binding proteins"/>
    <property type="match status" value="1"/>
</dbReference>
<dbReference type="InterPro" id="IPR000119">
    <property type="entry name" value="Hist_DNA-bd"/>
</dbReference>
<dbReference type="InterPro" id="IPR010992">
    <property type="entry name" value="IHF-like_DNA-bd_dom_sf"/>
</dbReference>
<dbReference type="PANTHER" id="PTHR33175">
    <property type="entry name" value="DNA-BINDING PROTEIN HU"/>
    <property type="match status" value="1"/>
</dbReference>
<dbReference type="PANTHER" id="PTHR33175:SF2">
    <property type="entry name" value="INTEGRATION HOST FACTOR SUBUNIT ALPHA"/>
    <property type="match status" value="1"/>
</dbReference>
<dbReference type="Pfam" id="PF00216">
    <property type="entry name" value="Bac_DNA_binding"/>
    <property type="match status" value="1"/>
</dbReference>
<dbReference type="SMART" id="SM00411">
    <property type="entry name" value="BHL"/>
    <property type="match status" value="1"/>
</dbReference>
<dbReference type="SUPFAM" id="SSF47729">
    <property type="entry name" value="IHF-like DNA-binding proteins"/>
    <property type="match status" value="1"/>
</dbReference>
<evidence type="ECO:0000305" key="1"/>
<protein>
    <recommendedName>
        <fullName>Histone-like DNA-binding protein</fullName>
    </recommendedName>
</protein>
<reference key="1">
    <citation type="journal article" date="2005" name="PLoS Biol.">
        <title>The genome sequence of Rickettsia felis identifies the first putative conjugative plasmid in an obligate intracellular parasite.</title>
        <authorList>
            <person name="Ogata H."/>
            <person name="Renesto P."/>
            <person name="Audic S."/>
            <person name="Robert C."/>
            <person name="Blanc G."/>
            <person name="Fournier P.-E."/>
            <person name="Parinello H."/>
            <person name="Claverie J.-M."/>
            <person name="Raoult D."/>
        </authorList>
    </citation>
    <scope>NUCLEOTIDE SEQUENCE [LARGE SCALE GENOMIC DNA]</scope>
    <source>
        <strain>ATCC VR-1525 / URRWXCal2</strain>
    </source>
</reference>
<keyword id="KW-0238">DNA-binding</keyword>